<dbReference type="EMBL" id="AP009493">
    <property type="protein sequence ID" value="BAG22845.1"/>
    <property type="molecule type" value="Genomic_DNA"/>
</dbReference>
<dbReference type="RefSeq" id="WP_003970329.1">
    <property type="nucleotide sequence ID" value="NC_010572.1"/>
</dbReference>
<dbReference type="SMR" id="B1W3G3"/>
<dbReference type="KEGG" id="sgr:SGR_6016"/>
<dbReference type="eggNOG" id="COG0632">
    <property type="taxonomic scope" value="Bacteria"/>
</dbReference>
<dbReference type="HOGENOM" id="CLU_087936_2_1_11"/>
<dbReference type="Proteomes" id="UP000001685">
    <property type="component" value="Chromosome"/>
</dbReference>
<dbReference type="GO" id="GO:0005737">
    <property type="term" value="C:cytoplasm"/>
    <property type="evidence" value="ECO:0007669"/>
    <property type="project" value="UniProtKB-SubCell"/>
</dbReference>
<dbReference type="GO" id="GO:0009379">
    <property type="term" value="C:Holliday junction helicase complex"/>
    <property type="evidence" value="ECO:0007669"/>
    <property type="project" value="InterPro"/>
</dbReference>
<dbReference type="GO" id="GO:0048476">
    <property type="term" value="C:Holliday junction resolvase complex"/>
    <property type="evidence" value="ECO:0007669"/>
    <property type="project" value="UniProtKB-UniRule"/>
</dbReference>
<dbReference type="GO" id="GO:0005524">
    <property type="term" value="F:ATP binding"/>
    <property type="evidence" value="ECO:0007669"/>
    <property type="project" value="InterPro"/>
</dbReference>
<dbReference type="GO" id="GO:0000400">
    <property type="term" value="F:four-way junction DNA binding"/>
    <property type="evidence" value="ECO:0007669"/>
    <property type="project" value="UniProtKB-UniRule"/>
</dbReference>
<dbReference type="GO" id="GO:0009378">
    <property type="term" value="F:four-way junction helicase activity"/>
    <property type="evidence" value="ECO:0007669"/>
    <property type="project" value="InterPro"/>
</dbReference>
<dbReference type="GO" id="GO:0006310">
    <property type="term" value="P:DNA recombination"/>
    <property type="evidence" value="ECO:0007669"/>
    <property type="project" value="UniProtKB-UniRule"/>
</dbReference>
<dbReference type="GO" id="GO:0006281">
    <property type="term" value="P:DNA repair"/>
    <property type="evidence" value="ECO:0007669"/>
    <property type="project" value="UniProtKB-UniRule"/>
</dbReference>
<dbReference type="CDD" id="cd14332">
    <property type="entry name" value="UBA_RuvA_C"/>
    <property type="match status" value="1"/>
</dbReference>
<dbReference type="Gene3D" id="1.10.150.20">
    <property type="entry name" value="5' to 3' exonuclease, C-terminal subdomain"/>
    <property type="match status" value="1"/>
</dbReference>
<dbReference type="Gene3D" id="1.10.8.10">
    <property type="entry name" value="DNA helicase RuvA subunit, C-terminal domain"/>
    <property type="match status" value="1"/>
</dbReference>
<dbReference type="Gene3D" id="2.40.50.140">
    <property type="entry name" value="Nucleic acid-binding proteins"/>
    <property type="match status" value="1"/>
</dbReference>
<dbReference type="HAMAP" id="MF_00031">
    <property type="entry name" value="DNA_HJ_migration_RuvA"/>
    <property type="match status" value="1"/>
</dbReference>
<dbReference type="InterPro" id="IPR013849">
    <property type="entry name" value="DNA_helicase_Holl-junc_RuvA_I"/>
</dbReference>
<dbReference type="InterPro" id="IPR003583">
    <property type="entry name" value="Hlx-hairpin-Hlx_DNA-bd_motif"/>
</dbReference>
<dbReference type="InterPro" id="IPR012340">
    <property type="entry name" value="NA-bd_OB-fold"/>
</dbReference>
<dbReference type="InterPro" id="IPR000085">
    <property type="entry name" value="RuvA"/>
</dbReference>
<dbReference type="InterPro" id="IPR010994">
    <property type="entry name" value="RuvA_2-like"/>
</dbReference>
<dbReference type="InterPro" id="IPR011114">
    <property type="entry name" value="RuvA_C"/>
</dbReference>
<dbReference type="InterPro" id="IPR036267">
    <property type="entry name" value="RuvA_C_sf"/>
</dbReference>
<dbReference type="NCBIfam" id="TIGR00084">
    <property type="entry name" value="ruvA"/>
    <property type="match status" value="1"/>
</dbReference>
<dbReference type="Pfam" id="PF14520">
    <property type="entry name" value="HHH_5"/>
    <property type="match status" value="1"/>
</dbReference>
<dbReference type="Pfam" id="PF07499">
    <property type="entry name" value="RuvA_C"/>
    <property type="match status" value="1"/>
</dbReference>
<dbReference type="Pfam" id="PF01330">
    <property type="entry name" value="RuvA_N"/>
    <property type="match status" value="1"/>
</dbReference>
<dbReference type="SMART" id="SM00278">
    <property type="entry name" value="HhH1"/>
    <property type="match status" value="2"/>
</dbReference>
<dbReference type="SUPFAM" id="SSF46929">
    <property type="entry name" value="DNA helicase RuvA subunit, C-terminal domain"/>
    <property type="match status" value="1"/>
</dbReference>
<dbReference type="SUPFAM" id="SSF50249">
    <property type="entry name" value="Nucleic acid-binding proteins"/>
    <property type="match status" value="1"/>
</dbReference>
<dbReference type="SUPFAM" id="SSF47781">
    <property type="entry name" value="RuvA domain 2-like"/>
    <property type="match status" value="1"/>
</dbReference>
<organism>
    <name type="scientific">Streptomyces griseus subsp. griseus (strain JCM 4626 / CBS 651.72 / NBRC 13350 / KCC S-0626 / ISP 5235)</name>
    <dbReference type="NCBI Taxonomy" id="455632"/>
    <lineage>
        <taxon>Bacteria</taxon>
        <taxon>Bacillati</taxon>
        <taxon>Actinomycetota</taxon>
        <taxon>Actinomycetes</taxon>
        <taxon>Kitasatosporales</taxon>
        <taxon>Streptomycetaceae</taxon>
        <taxon>Streptomyces</taxon>
    </lineage>
</organism>
<sequence>MIAFVSGPVAALAPTTAVIEVGGIGMAVQCTPHTLADLRVGREARLATSLVVREDSLTLYGFANDDERQVFELLQTASGVGPRLAQAMLATHSPDALRLAVSTGDEKALTAVSGIGKKGAQKLLLELKDRLGEPVGAHIGQQGIGTPVTSGWRDQLQAALIGLGYASREADEAVNAVAPQAEAAVAEGTAPPVPQLLRAALQTLNRAR</sequence>
<reference key="1">
    <citation type="journal article" date="2008" name="J. Bacteriol.">
        <title>Genome sequence of the streptomycin-producing microorganism Streptomyces griseus IFO 13350.</title>
        <authorList>
            <person name="Ohnishi Y."/>
            <person name="Ishikawa J."/>
            <person name="Hara H."/>
            <person name="Suzuki H."/>
            <person name="Ikenoya M."/>
            <person name="Ikeda H."/>
            <person name="Yamashita A."/>
            <person name="Hattori M."/>
            <person name="Horinouchi S."/>
        </authorList>
    </citation>
    <scope>NUCLEOTIDE SEQUENCE [LARGE SCALE GENOMIC DNA]</scope>
    <source>
        <strain>JCM 4626 / CBS 651.72 / NBRC 13350 / KCC S-0626 / ISP 5235</strain>
    </source>
</reference>
<keyword id="KW-0963">Cytoplasm</keyword>
<keyword id="KW-0227">DNA damage</keyword>
<keyword id="KW-0233">DNA recombination</keyword>
<keyword id="KW-0234">DNA repair</keyword>
<keyword id="KW-0238">DNA-binding</keyword>
<feature type="chain" id="PRO_1000090372" description="Holliday junction branch migration complex subunit RuvA">
    <location>
        <begin position="1"/>
        <end position="208"/>
    </location>
</feature>
<feature type="region of interest" description="Domain I" evidence="1">
    <location>
        <begin position="1"/>
        <end position="63"/>
    </location>
</feature>
<feature type="region of interest" description="Domain II" evidence="1">
    <location>
        <begin position="64"/>
        <end position="142"/>
    </location>
</feature>
<feature type="region of interest" description="Flexible linker" evidence="1">
    <location>
        <begin position="143"/>
        <end position="147"/>
    </location>
</feature>
<feature type="region of interest" description="Domain III" evidence="1">
    <location>
        <begin position="148"/>
        <end position="208"/>
    </location>
</feature>
<evidence type="ECO:0000255" key="1">
    <source>
        <dbReference type="HAMAP-Rule" id="MF_00031"/>
    </source>
</evidence>
<proteinExistence type="inferred from homology"/>
<protein>
    <recommendedName>
        <fullName evidence="1">Holliday junction branch migration complex subunit RuvA</fullName>
    </recommendedName>
</protein>
<accession>B1W3G3</accession>
<comment type="function">
    <text evidence="1">The RuvA-RuvB-RuvC complex processes Holliday junction (HJ) DNA during genetic recombination and DNA repair, while the RuvA-RuvB complex plays an important role in the rescue of blocked DNA replication forks via replication fork reversal (RFR). RuvA specifically binds to HJ cruciform DNA, conferring on it an open structure. The RuvB hexamer acts as an ATP-dependent pump, pulling dsDNA into and through the RuvAB complex. HJ branch migration allows RuvC to scan DNA until it finds its consensus sequence, where it cleaves and resolves the cruciform DNA.</text>
</comment>
<comment type="subunit">
    <text evidence="1">Homotetramer. Forms an RuvA(8)-RuvB(12)-Holliday junction (HJ) complex. HJ DNA is sandwiched between 2 RuvA tetramers; dsDNA enters through RuvA and exits via RuvB. An RuvB hexamer assembles on each DNA strand where it exits the tetramer. Each RuvB hexamer is contacted by two RuvA subunits (via domain III) on 2 adjacent RuvB subunits; this complex drives branch migration. In the full resolvosome a probable DNA-RuvA(4)-RuvB(12)-RuvC(2) complex forms which resolves the HJ.</text>
</comment>
<comment type="subcellular location">
    <subcellularLocation>
        <location evidence="1">Cytoplasm</location>
    </subcellularLocation>
</comment>
<comment type="domain">
    <text evidence="1">Has three domains with a flexible linker between the domains II and III and assumes an 'L' shape. Domain III is highly mobile and contacts RuvB.</text>
</comment>
<comment type="similarity">
    <text evidence="1">Belongs to the RuvA family.</text>
</comment>
<name>RUVA_STRGG</name>
<gene>
    <name evidence="1" type="primary">ruvA</name>
    <name type="ordered locus">SGR_6016</name>
</gene>